<protein>
    <recommendedName>
        <fullName evidence="1">Arginine--tRNA ligase</fullName>
        <ecNumber evidence="1">6.1.1.19</ecNumber>
    </recommendedName>
    <alternativeName>
        <fullName evidence="1">Arginyl-tRNA synthetase</fullName>
        <shortName evidence="1">ArgRS</shortName>
    </alternativeName>
</protein>
<name>SYR_HELPH</name>
<feature type="chain" id="PRO_1000018041" description="Arginine--tRNA ligase">
    <location>
        <begin position="1"/>
        <end position="541"/>
    </location>
</feature>
<feature type="short sequence motif" description="'HIGH' region">
    <location>
        <begin position="119"/>
        <end position="129"/>
    </location>
</feature>
<comment type="catalytic activity">
    <reaction evidence="1">
        <text>tRNA(Arg) + L-arginine + ATP = L-arginyl-tRNA(Arg) + AMP + diphosphate</text>
        <dbReference type="Rhea" id="RHEA:20301"/>
        <dbReference type="Rhea" id="RHEA-COMP:9658"/>
        <dbReference type="Rhea" id="RHEA-COMP:9673"/>
        <dbReference type="ChEBI" id="CHEBI:30616"/>
        <dbReference type="ChEBI" id="CHEBI:32682"/>
        <dbReference type="ChEBI" id="CHEBI:33019"/>
        <dbReference type="ChEBI" id="CHEBI:78442"/>
        <dbReference type="ChEBI" id="CHEBI:78513"/>
        <dbReference type="ChEBI" id="CHEBI:456215"/>
        <dbReference type="EC" id="6.1.1.19"/>
    </reaction>
</comment>
<comment type="subunit">
    <text evidence="1">Monomer.</text>
</comment>
<comment type="subcellular location">
    <subcellularLocation>
        <location evidence="1">Cytoplasm</location>
    </subcellularLocation>
</comment>
<comment type="similarity">
    <text evidence="1">Belongs to the class-I aminoacyl-tRNA synthetase family.</text>
</comment>
<gene>
    <name evidence="1" type="primary">argS</name>
    <name type="ordered locus">HPAG1_0322</name>
</gene>
<reference key="1">
    <citation type="journal article" date="2006" name="Proc. Natl. Acad. Sci. U.S.A.">
        <title>The complete genome sequence of a chronic atrophic gastritis Helicobacter pylori strain: evolution during disease progression.</title>
        <authorList>
            <person name="Oh J.D."/>
            <person name="Kling-Baeckhed H."/>
            <person name="Giannakis M."/>
            <person name="Xu J."/>
            <person name="Fulton R.S."/>
            <person name="Fulton L.A."/>
            <person name="Cordum H.S."/>
            <person name="Wang C."/>
            <person name="Elliott G."/>
            <person name="Edwards J."/>
            <person name="Mardis E.R."/>
            <person name="Engstrand L.G."/>
            <person name="Gordon J.I."/>
        </authorList>
    </citation>
    <scope>NUCLEOTIDE SEQUENCE [LARGE SCALE GENOMIC DNA]</scope>
    <source>
        <strain>HPAG1</strain>
    </source>
</reference>
<organism>
    <name type="scientific">Helicobacter pylori (strain HPAG1)</name>
    <dbReference type="NCBI Taxonomy" id="357544"/>
    <lineage>
        <taxon>Bacteria</taxon>
        <taxon>Pseudomonadati</taxon>
        <taxon>Campylobacterota</taxon>
        <taxon>Epsilonproteobacteria</taxon>
        <taxon>Campylobacterales</taxon>
        <taxon>Helicobacteraceae</taxon>
        <taxon>Helicobacter</taxon>
    </lineage>
</organism>
<evidence type="ECO:0000255" key="1">
    <source>
        <dbReference type="HAMAP-Rule" id="MF_00123"/>
    </source>
</evidence>
<sequence>MHTLIKGVLEEILEEEVIIEYPKDREHGHYATPIAFNLAKVFKKSPLVIAEELALKISTHEKTQGLFDSIVACKGYINFTLSLDLLERFTQKALELKEQFGSQIKSERSQKIFLEFVSANPTGPLHIGHARGAVFGDSLAKIARFLGHEVLCEYYVNDMGSQIRLLGLSVWLAYREHVLKENVTYPEVFYKGEYIIEIAKKANNDLEPSLFKENEETIIEVLSGYAKDLMLLEIKDNLDALGIHFDSYASEKEIFKHKDAVFERLEKANALYEKDSKIWLKSSLYQDESDRVLIKEDKSYTYLTGDIVYHDEKFKQDYTKYINIWGADHHGYIARVKASLEFLGYDSNKLEVLLAQMVRLLKDNEPYKMSKRAGNFILIKDVIDDVGKDALRFIFLSKRLDTHLEFDVNTLKKQDSSNPIYYIHYANSRIHTMLEKSPFSKEEVLQTPLKNLNAEEKYLLFSTLSLPKAIESSFEEYGLQKMCEYAKTLASEFHRFYNAGKILDTPKAKELLKICLMVSLSLTNAFKLLGIEIKTKISAKD</sequence>
<dbReference type="EC" id="6.1.1.19" evidence="1"/>
<dbReference type="EMBL" id="CP000241">
    <property type="protein sequence ID" value="ABF84389.1"/>
    <property type="molecule type" value="Genomic_DNA"/>
</dbReference>
<dbReference type="RefSeq" id="WP_000557175.1">
    <property type="nucleotide sequence ID" value="NC_008086.1"/>
</dbReference>
<dbReference type="SMR" id="Q1CUI3"/>
<dbReference type="KEGG" id="hpa:HPAG1_0322"/>
<dbReference type="HOGENOM" id="CLU_006406_0_1_7"/>
<dbReference type="GO" id="GO:0005737">
    <property type="term" value="C:cytoplasm"/>
    <property type="evidence" value="ECO:0007669"/>
    <property type="project" value="UniProtKB-SubCell"/>
</dbReference>
<dbReference type="GO" id="GO:0004814">
    <property type="term" value="F:arginine-tRNA ligase activity"/>
    <property type="evidence" value="ECO:0007669"/>
    <property type="project" value="UniProtKB-UniRule"/>
</dbReference>
<dbReference type="GO" id="GO:0005524">
    <property type="term" value="F:ATP binding"/>
    <property type="evidence" value="ECO:0007669"/>
    <property type="project" value="UniProtKB-UniRule"/>
</dbReference>
<dbReference type="GO" id="GO:0006420">
    <property type="term" value="P:arginyl-tRNA aminoacylation"/>
    <property type="evidence" value="ECO:0007669"/>
    <property type="project" value="UniProtKB-UniRule"/>
</dbReference>
<dbReference type="CDD" id="cd00671">
    <property type="entry name" value="ArgRS_core"/>
    <property type="match status" value="1"/>
</dbReference>
<dbReference type="FunFam" id="3.30.1360.70:FF:000008">
    <property type="entry name" value="Arginine--tRNA ligase"/>
    <property type="match status" value="1"/>
</dbReference>
<dbReference type="FunFam" id="3.40.50.620:FF:000062">
    <property type="entry name" value="Arginine--tRNA ligase"/>
    <property type="match status" value="1"/>
</dbReference>
<dbReference type="Gene3D" id="3.30.1360.70">
    <property type="entry name" value="Arginyl tRNA synthetase N-terminal domain"/>
    <property type="match status" value="1"/>
</dbReference>
<dbReference type="Gene3D" id="3.40.50.620">
    <property type="entry name" value="HUPs"/>
    <property type="match status" value="1"/>
</dbReference>
<dbReference type="Gene3D" id="1.10.730.10">
    <property type="entry name" value="Isoleucyl-tRNA Synthetase, Domain 1"/>
    <property type="match status" value="1"/>
</dbReference>
<dbReference type="HAMAP" id="MF_00123">
    <property type="entry name" value="Arg_tRNA_synth"/>
    <property type="match status" value="1"/>
</dbReference>
<dbReference type="InterPro" id="IPR001412">
    <property type="entry name" value="aa-tRNA-synth_I_CS"/>
</dbReference>
<dbReference type="InterPro" id="IPR001278">
    <property type="entry name" value="Arg-tRNA-ligase"/>
</dbReference>
<dbReference type="InterPro" id="IPR005148">
    <property type="entry name" value="Arg-tRNA-synth_N"/>
</dbReference>
<dbReference type="InterPro" id="IPR036695">
    <property type="entry name" value="Arg-tRNA-synth_N_sf"/>
</dbReference>
<dbReference type="InterPro" id="IPR035684">
    <property type="entry name" value="ArgRS_core"/>
</dbReference>
<dbReference type="InterPro" id="IPR008909">
    <property type="entry name" value="DALR_anticod-bd"/>
</dbReference>
<dbReference type="InterPro" id="IPR014729">
    <property type="entry name" value="Rossmann-like_a/b/a_fold"/>
</dbReference>
<dbReference type="InterPro" id="IPR009080">
    <property type="entry name" value="tRNAsynth_Ia_anticodon-bd"/>
</dbReference>
<dbReference type="NCBIfam" id="TIGR00456">
    <property type="entry name" value="argS"/>
    <property type="match status" value="1"/>
</dbReference>
<dbReference type="PANTHER" id="PTHR11956:SF5">
    <property type="entry name" value="ARGININE--TRNA LIGASE, CYTOPLASMIC"/>
    <property type="match status" value="1"/>
</dbReference>
<dbReference type="PANTHER" id="PTHR11956">
    <property type="entry name" value="ARGINYL-TRNA SYNTHETASE"/>
    <property type="match status" value="1"/>
</dbReference>
<dbReference type="Pfam" id="PF03485">
    <property type="entry name" value="Arg_tRNA_synt_N"/>
    <property type="match status" value="1"/>
</dbReference>
<dbReference type="Pfam" id="PF05746">
    <property type="entry name" value="DALR_1"/>
    <property type="match status" value="1"/>
</dbReference>
<dbReference type="Pfam" id="PF00750">
    <property type="entry name" value="tRNA-synt_1d"/>
    <property type="match status" value="1"/>
</dbReference>
<dbReference type="PRINTS" id="PR01038">
    <property type="entry name" value="TRNASYNTHARG"/>
</dbReference>
<dbReference type="SMART" id="SM01016">
    <property type="entry name" value="Arg_tRNA_synt_N"/>
    <property type="match status" value="1"/>
</dbReference>
<dbReference type="SMART" id="SM00836">
    <property type="entry name" value="DALR_1"/>
    <property type="match status" value="1"/>
</dbReference>
<dbReference type="SUPFAM" id="SSF47323">
    <property type="entry name" value="Anticodon-binding domain of a subclass of class I aminoacyl-tRNA synthetases"/>
    <property type="match status" value="1"/>
</dbReference>
<dbReference type="SUPFAM" id="SSF55190">
    <property type="entry name" value="Arginyl-tRNA synthetase (ArgRS), N-terminal 'additional' domain"/>
    <property type="match status" value="1"/>
</dbReference>
<dbReference type="SUPFAM" id="SSF52374">
    <property type="entry name" value="Nucleotidylyl transferase"/>
    <property type="match status" value="1"/>
</dbReference>
<dbReference type="PROSITE" id="PS00178">
    <property type="entry name" value="AA_TRNA_LIGASE_I"/>
    <property type="match status" value="1"/>
</dbReference>
<proteinExistence type="inferred from homology"/>
<keyword id="KW-0030">Aminoacyl-tRNA synthetase</keyword>
<keyword id="KW-0067">ATP-binding</keyword>
<keyword id="KW-0963">Cytoplasm</keyword>
<keyword id="KW-0436">Ligase</keyword>
<keyword id="KW-0547">Nucleotide-binding</keyword>
<keyword id="KW-0648">Protein biosynthesis</keyword>
<accession>Q1CUI3</accession>